<gene>
    <name evidence="1" type="primary">petN</name>
    <name type="ordered locus">P9301_08001</name>
</gene>
<organism>
    <name type="scientific">Prochlorococcus marinus (strain MIT 9301)</name>
    <dbReference type="NCBI Taxonomy" id="167546"/>
    <lineage>
        <taxon>Bacteria</taxon>
        <taxon>Bacillati</taxon>
        <taxon>Cyanobacteriota</taxon>
        <taxon>Cyanophyceae</taxon>
        <taxon>Synechococcales</taxon>
        <taxon>Prochlorococcaceae</taxon>
        <taxon>Prochlorococcus</taxon>
    </lineage>
</organism>
<proteinExistence type="inferred from homology"/>
<reference key="1">
    <citation type="journal article" date="2007" name="PLoS Genet.">
        <title>Patterns and implications of gene gain and loss in the evolution of Prochlorococcus.</title>
        <authorList>
            <person name="Kettler G.C."/>
            <person name="Martiny A.C."/>
            <person name="Huang K."/>
            <person name="Zucker J."/>
            <person name="Coleman M.L."/>
            <person name="Rodrigue S."/>
            <person name="Chen F."/>
            <person name="Lapidus A."/>
            <person name="Ferriera S."/>
            <person name="Johnson J."/>
            <person name="Steglich C."/>
            <person name="Church G.M."/>
            <person name="Richardson P."/>
            <person name="Chisholm S.W."/>
        </authorList>
    </citation>
    <scope>NUCLEOTIDE SEQUENCE [LARGE SCALE GENOMIC DNA]</scope>
    <source>
        <strain>MIT 9301</strain>
    </source>
</reference>
<accession>A3PCE8</accession>
<sequence length="33" mass="3572">MIFQIGWAALAAIFTFSIAMVVWGRNGDGSIDI</sequence>
<feature type="chain" id="PRO_1000049573" description="Cytochrome b6-f complex subunit 8">
    <location>
        <begin position="1"/>
        <end position="33"/>
    </location>
</feature>
<feature type="transmembrane region" description="Helical" evidence="1">
    <location>
        <begin position="2"/>
        <end position="22"/>
    </location>
</feature>
<name>PETN_PROM0</name>
<evidence type="ECO:0000255" key="1">
    <source>
        <dbReference type="HAMAP-Rule" id="MF_00395"/>
    </source>
</evidence>
<protein>
    <recommendedName>
        <fullName evidence="1">Cytochrome b6-f complex subunit 8</fullName>
    </recommendedName>
    <alternativeName>
        <fullName evidence="1">Cytochrome b6-f complex subunit PetN</fullName>
    </alternativeName>
    <alternativeName>
        <fullName evidence="1">Cytochrome b6-f complex subunit VIII</fullName>
    </alternativeName>
</protein>
<keyword id="KW-0249">Electron transport</keyword>
<keyword id="KW-0472">Membrane</keyword>
<keyword id="KW-0602">Photosynthesis</keyword>
<keyword id="KW-1185">Reference proteome</keyword>
<keyword id="KW-0793">Thylakoid</keyword>
<keyword id="KW-0812">Transmembrane</keyword>
<keyword id="KW-1133">Transmembrane helix</keyword>
<keyword id="KW-0813">Transport</keyword>
<dbReference type="EMBL" id="CP000576">
    <property type="protein sequence ID" value="ABO17423.1"/>
    <property type="molecule type" value="Genomic_DNA"/>
</dbReference>
<dbReference type="RefSeq" id="WP_011376303.1">
    <property type="nucleotide sequence ID" value="NC_009091.1"/>
</dbReference>
<dbReference type="SMR" id="A3PCE8"/>
<dbReference type="STRING" id="167546.P9301_08001"/>
<dbReference type="KEGG" id="pmg:P9301_08001"/>
<dbReference type="HOGENOM" id="CLU_215774_0_0_3"/>
<dbReference type="OrthoDB" id="560308at2"/>
<dbReference type="Proteomes" id="UP000001430">
    <property type="component" value="Chromosome"/>
</dbReference>
<dbReference type="GO" id="GO:0009512">
    <property type="term" value="C:cytochrome b6f complex"/>
    <property type="evidence" value="ECO:0007669"/>
    <property type="project" value="InterPro"/>
</dbReference>
<dbReference type="GO" id="GO:0031676">
    <property type="term" value="C:plasma membrane-derived thylakoid membrane"/>
    <property type="evidence" value="ECO:0007669"/>
    <property type="project" value="UniProtKB-SubCell"/>
</dbReference>
<dbReference type="GO" id="GO:0045158">
    <property type="term" value="F:electron transporter, transferring electrons within cytochrome b6/f complex of photosystem II activity"/>
    <property type="evidence" value="ECO:0007669"/>
    <property type="project" value="InterPro"/>
</dbReference>
<dbReference type="GO" id="GO:0017004">
    <property type="term" value="P:cytochrome complex assembly"/>
    <property type="evidence" value="ECO:0007669"/>
    <property type="project" value="UniProtKB-UniRule"/>
</dbReference>
<dbReference type="GO" id="GO:0015979">
    <property type="term" value="P:photosynthesis"/>
    <property type="evidence" value="ECO:0007669"/>
    <property type="project" value="UniProtKB-KW"/>
</dbReference>
<dbReference type="HAMAP" id="MF_00395">
    <property type="entry name" value="Cytb6_f_PetN"/>
    <property type="match status" value="1"/>
</dbReference>
<dbReference type="InterPro" id="IPR036143">
    <property type="entry name" value="Cytochr_b6-f_cplx_su8_sf"/>
</dbReference>
<dbReference type="InterPro" id="IPR005497">
    <property type="entry name" value="Cytochrome_b6-f_cplx_su8"/>
</dbReference>
<dbReference type="NCBIfam" id="NF002709">
    <property type="entry name" value="PRK02529.1"/>
    <property type="match status" value="1"/>
</dbReference>
<dbReference type="Pfam" id="PF03742">
    <property type="entry name" value="PetN"/>
    <property type="match status" value="1"/>
</dbReference>
<dbReference type="SUPFAM" id="SSF103451">
    <property type="entry name" value="PetN subunit of the cytochrome b6f complex"/>
    <property type="match status" value="1"/>
</dbReference>
<comment type="function">
    <text evidence="1">Component of the cytochrome b6-f complex, which mediates electron transfer between photosystem II (PSII) and photosystem I (PSI), cyclic electron flow around PSI, and state transitions.</text>
</comment>
<comment type="subunit">
    <text evidence="1">The 4 large subunits of the cytochrome b6-f complex are cytochrome b6, subunit IV (17 kDa polypeptide, PetD), cytochrome f and the Rieske protein, while the 4 small subunits are PetG, PetL, PetM and PetN. The complex functions as a dimer.</text>
</comment>
<comment type="subcellular location">
    <subcellularLocation>
        <location evidence="1">Cellular thylakoid membrane</location>
        <topology evidence="1">Single-pass membrane protein</topology>
    </subcellularLocation>
</comment>
<comment type="similarity">
    <text evidence="1">Belongs to the PetN family.</text>
</comment>